<proteinExistence type="evidence at transcript level"/>
<gene>
    <name evidence="6" type="ordered locus">Os05g0571100</name>
    <name evidence="4" type="ordered locus">LOC_Os05g49610</name>
    <name evidence="5" type="ORF">OJ1735_C10.3</name>
    <name evidence="7" type="ORF">OsJ_19611</name>
</gene>
<accession>Q65XL5</accession>
<sequence>MDAKLLLLPFPSPPATLHHHPPPPKSLFLGASLPLLHPPPPLRLLRPGAPRRLAVVAQAAVKRRKEIPFDNVIQRDKKLKLVLKLRNILVSNPDRVMSLRDLGRFRRDLGLTRKRRLIALLKRFPGVFEVVEEGVYSLRFRLTPAAERLYLDELHLKNESEGLAVTKLRKLLMMSQDKRILIEKIAHLKNDLGLPPEFRDTICLRYPQYFRVVQMDRGPGLELTHWDPELAVSAAEVAEEENRAREEQERNLIIDRPLKFNRVKLPQGLKLSRGEARRVAQFKEMPYISPYSDFSHLRSGSAEKEKHACGVVHEILSLTLEKRTLVDHLTHFREEFRFSQSLRGMLIRHPDMFYVSLKGDRDSVFLREAYKNSQLVEKSKLVLLKEKMRALVAVPRFPRRGVPATSEEADRTNGAAQMLSEGSDVEDDEDEGLSDMEDLISEISGGKSDTDYHWGDGWVGENDDSPPDFEDDDGSSLKEVKVTMKKTANSANGKAHVPVFPDGRPRERW</sequence>
<evidence type="ECO:0000250" key="1">
    <source>
        <dbReference type="UniProtKB" id="B6TTV8"/>
    </source>
</evidence>
<evidence type="ECO:0000255" key="2"/>
<evidence type="ECO:0000256" key="3">
    <source>
        <dbReference type="SAM" id="MobiDB-lite"/>
    </source>
</evidence>
<evidence type="ECO:0000305" key="4"/>
<evidence type="ECO:0000312" key="5">
    <source>
        <dbReference type="EMBL" id="AAU44092.1"/>
    </source>
</evidence>
<evidence type="ECO:0000312" key="6">
    <source>
        <dbReference type="EMBL" id="BAF18285.1"/>
    </source>
</evidence>
<evidence type="ECO:0000312" key="7">
    <source>
        <dbReference type="EMBL" id="EEE64755.1"/>
    </source>
</evidence>
<keyword id="KW-0150">Chloroplast</keyword>
<keyword id="KW-0507">mRNA processing</keyword>
<keyword id="KW-0508">mRNA splicing</keyword>
<keyword id="KW-0934">Plastid</keyword>
<keyword id="KW-1185">Reference proteome</keyword>
<keyword id="KW-0694">RNA-binding</keyword>
<keyword id="KW-0809">Transit peptide</keyword>
<name>WTF1_ORYSJ</name>
<comment type="function">
    <text evidence="1">RNA-binding protein involved in group II intron splicing. Binds specific group II introns and promotes their splicing. Functions in the context of a heterodimer with the ribonuclease III domain-containing protein RNC1.</text>
</comment>
<comment type="subcellular location">
    <subcellularLocation>
        <location evidence="2">Plastid</location>
        <location evidence="2">Chloroplast</location>
    </subcellularLocation>
</comment>
<protein>
    <recommendedName>
        <fullName evidence="4">Protein WHAT'S THIS FACTOR 1 homolog, chloroplastic</fullName>
    </recommendedName>
</protein>
<organism>
    <name type="scientific">Oryza sativa subsp. japonica</name>
    <name type="common">Rice</name>
    <dbReference type="NCBI Taxonomy" id="39947"/>
    <lineage>
        <taxon>Eukaryota</taxon>
        <taxon>Viridiplantae</taxon>
        <taxon>Streptophyta</taxon>
        <taxon>Embryophyta</taxon>
        <taxon>Tracheophyta</taxon>
        <taxon>Spermatophyta</taxon>
        <taxon>Magnoliopsida</taxon>
        <taxon>Liliopsida</taxon>
        <taxon>Poales</taxon>
        <taxon>Poaceae</taxon>
        <taxon>BOP clade</taxon>
        <taxon>Oryzoideae</taxon>
        <taxon>Oryzeae</taxon>
        <taxon>Oryzinae</taxon>
        <taxon>Oryza</taxon>
        <taxon>Oryza sativa</taxon>
    </lineage>
</organism>
<reference key="1">
    <citation type="journal article" date="2005" name="Mol. Genet. Genomics">
        <title>A fine physical map of the rice chromosome 5.</title>
        <authorList>
            <person name="Cheng C.-H."/>
            <person name="Chung M.C."/>
            <person name="Liu S.-M."/>
            <person name="Chen S.-K."/>
            <person name="Kao F.Y."/>
            <person name="Lin S.-J."/>
            <person name="Hsiao S.-H."/>
            <person name="Tseng I.C."/>
            <person name="Hsing Y.-I.C."/>
            <person name="Wu H.-P."/>
            <person name="Chen C.-S."/>
            <person name="Shaw J.-F."/>
            <person name="Wu J."/>
            <person name="Matsumoto T."/>
            <person name="Sasaki T."/>
            <person name="Chen H.-C."/>
            <person name="Chow T.-Y."/>
        </authorList>
    </citation>
    <scope>NUCLEOTIDE SEQUENCE [LARGE SCALE GENOMIC DNA]</scope>
    <source>
        <strain>cv. Nipponbare</strain>
    </source>
</reference>
<reference key="2">
    <citation type="journal article" date="2005" name="Nature">
        <title>The map-based sequence of the rice genome.</title>
        <authorList>
            <consortium name="International rice genome sequencing project (IRGSP)"/>
        </authorList>
    </citation>
    <scope>NUCLEOTIDE SEQUENCE [LARGE SCALE GENOMIC DNA]</scope>
    <source>
        <strain>cv. Nipponbare</strain>
    </source>
</reference>
<reference key="3">
    <citation type="journal article" date="2008" name="Nucleic Acids Res.">
        <title>The rice annotation project database (RAP-DB): 2008 update.</title>
        <authorList>
            <consortium name="The rice annotation project (RAP)"/>
        </authorList>
    </citation>
    <scope>GENOME REANNOTATION</scope>
    <source>
        <strain>cv. Nipponbare</strain>
    </source>
</reference>
<reference key="4">
    <citation type="journal article" date="2013" name="Rice">
        <title>Improvement of the Oryza sativa Nipponbare reference genome using next generation sequence and optical map data.</title>
        <authorList>
            <person name="Kawahara Y."/>
            <person name="de la Bastide M."/>
            <person name="Hamilton J.P."/>
            <person name="Kanamori H."/>
            <person name="McCombie W.R."/>
            <person name="Ouyang S."/>
            <person name="Schwartz D.C."/>
            <person name="Tanaka T."/>
            <person name="Wu J."/>
            <person name="Zhou S."/>
            <person name="Childs K.L."/>
            <person name="Davidson R.M."/>
            <person name="Lin H."/>
            <person name="Quesada-Ocampo L."/>
            <person name="Vaillancourt B."/>
            <person name="Sakai H."/>
            <person name="Lee S.S."/>
            <person name="Kim J."/>
            <person name="Numa H."/>
            <person name="Itoh T."/>
            <person name="Buell C.R."/>
            <person name="Matsumoto T."/>
        </authorList>
    </citation>
    <scope>GENOME REANNOTATION</scope>
    <source>
        <strain>cv. Nipponbare</strain>
    </source>
</reference>
<reference key="5">
    <citation type="journal article" date="2005" name="PLoS Biol.">
        <title>The genomes of Oryza sativa: a history of duplications.</title>
        <authorList>
            <person name="Yu J."/>
            <person name="Wang J."/>
            <person name="Lin W."/>
            <person name="Li S."/>
            <person name="Li H."/>
            <person name="Zhou J."/>
            <person name="Ni P."/>
            <person name="Dong W."/>
            <person name="Hu S."/>
            <person name="Zeng C."/>
            <person name="Zhang J."/>
            <person name="Zhang Y."/>
            <person name="Li R."/>
            <person name="Xu Z."/>
            <person name="Li S."/>
            <person name="Li X."/>
            <person name="Zheng H."/>
            <person name="Cong L."/>
            <person name="Lin L."/>
            <person name="Yin J."/>
            <person name="Geng J."/>
            <person name="Li G."/>
            <person name="Shi J."/>
            <person name="Liu J."/>
            <person name="Lv H."/>
            <person name="Li J."/>
            <person name="Wang J."/>
            <person name="Deng Y."/>
            <person name="Ran L."/>
            <person name="Shi X."/>
            <person name="Wang X."/>
            <person name="Wu Q."/>
            <person name="Li C."/>
            <person name="Ren X."/>
            <person name="Wang J."/>
            <person name="Wang X."/>
            <person name="Li D."/>
            <person name="Liu D."/>
            <person name="Zhang X."/>
            <person name="Ji Z."/>
            <person name="Zhao W."/>
            <person name="Sun Y."/>
            <person name="Zhang Z."/>
            <person name="Bao J."/>
            <person name="Han Y."/>
            <person name="Dong L."/>
            <person name="Ji J."/>
            <person name="Chen P."/>
            <person name="Wu S."/>
            <person name="Liu J."/>
            <person name="Xiao Y."/>
            <person name="Bu D."/>
            <person name="Tan J."/>
            <person name="Yang L."/>
            <person name="Ye C."/>
            <person name="Zhang J."/>
            <person name="Xu J."/>
            <person name="Zhou Y."/>
            <person name="Yu Y."/>
            <person name="Zhang B."/>
            <person name="Zhuang S."/>
            <person name="Wei H."/>
            <person name="Liu B."/>
            <person name="Lei M."/>
            <person name="Yu H."/>
            <person name="Li Y."/>
            <person name="Xu H."/>
            <person name="Wei S."/>
            <person name="He X."/>
            <person name="Fang L."/>
            <person name="Zhang Z."/>
            <person name="Zhang Y."/>
            <person name="Huang X."/>
            <person name="Su Z."/>
            <person name="Tong W."/>
            <person name="Li J."/>
            <person name="Tong Z."/>
            <person name="Li S."/>
            <person name="Ye J."/>
            <person name="Wang L."/>
            <person name="Fang L."/>
            <person name="Lei T."/>
            <person name="Chen C.-S."/>
            <person name="Chen H.-C."/>
            <person name="Xu Z."/>
            <person name="Li H."/>
            <person name="Huang H."/>
            <person name="Zhang F."/>
            <person name="Xu H."/>
            <person name="Li N."/>
            <person name="Zhao C."/>
            <person name="Li S."/>
            <person name="Dong L."/>
            <person name="Huang Y."/>
            <person name="Li L."/>
            <person name="Xi Y."/>
            <person name="Qi Q."/>
            <person name="Li W."/>
            <person name="Zhang B."/>
            <person name="Hu W."/>
            <person name="Zhang Y."/>
            <person name="Tian X."/>
            <person name="Jiao Y."/>
            <person name="Liang X."/>
            <person name="Jin J."/>
            <person name="Gao L."/>
            <person name="Zheng W."/>
            <person name="Hao B."/>
            <person name="Liu S.-M."/>
            <person name="Wang W."/>
            <person name="Yuan L."/>
            <person name="Cao M."/>
            <person name="McDermott J."/>
            <person name="Samudrala R."/>
            <person name="Wang J."/>
            <person name="Wong G.K.-S."/>
            <person name="Yang H."/>
        </authorList>
    </citation>
    <scope>NUCLEOTIDE SEQUENCE [LARGE SCALE GENOMIC DNA]</scope>
    <source>
        <strain>cv. Nipponbare</strain>
    </source>
</reference>
<reference key="6">
    <citation type="journal article" date="2003" name="Science">
        <title>Collection, mapping, and annotation of over 28,000 cDNA clones from japonica rice.</title>
        <authorList>
            <consortium name="The rice full-length cDNA consortium"/>
        </authorList>
    </citation>
    <scope>NUCLEOTIDE SEQUENCE [LARGE SCALE MRNA]</scope>
    <source>
        <strain>cv. Nipponbare</strain>
    </source>
</reference>
<dbReference type="EMBL" id="AC104284">
    <property type="protein sequence ID" value="AAU44092.1"/>
    <property type="molecule type" value="Genomic_DNA"/>
</dbReference>
<dbReference type="EMBL" id="AP008211">
    <property type="protein sequence ID" value="BAF18285.1"/>
    <property type="molecule type" value="Genomic_DNA"/>
</dbReference>
<dbReference type="EMBL" id="AP014961">
    <property type="protein sequence ID" value="BAS95426.1"/>
    <property type="molecule type" value="Genomic_DNA"/>
</dbReference>
<dbReference type="EMBL" id="CM000142">
    <property type="protein sequence ID" value="EEE64755.1"/>
    <property type="molecule type" value="Genomic_DNA"/>
</dbReference>
<dbReference type="EMBL" id="AK068658">
    <property type="protein sequence ID" value="BAG91013.1"/>
    <property type="molecule type" value="mRNA"/>
</dbReference>
<dbReference type="EMBL" id="AK104438">
    <property type="protein sequence ID" value="BAG96683.1"/>
    <property type="molecule type" value="mRNA"/>
</dbReference>
<dbReference type="FunCoup" id="Q65XL5">
    <property type="interactions" value="1564"/>
</dbReference>
<dbReference type="STRING" id="39947.Q65XL5"/>
<dbReference type="PaxDb" id="39947-Q65XL5"/>
<dbReference type="EnsemblPlants" id="Os05t0571100-01">
    <property type="protein sequence ID" value="Os05t0571100-01"/>
    <property type="gene ID" value="Os05g0571100"/>
</dbReference>
<dbReference type="EnsemblPlants" id="Os05t0571100-02">
    <property type="protein sequence ID" value="Os05t0571100-02"/>
    <property type="gene ID" value="Os05g0571100"/>
</dbReference>
<dbReference type="Gramene" id="Os05t0571100-01">
    <property type="protein sequence ID" value="Os05t0571100-01"/>
    <property type="gene ID" value="Os05g0571100"/>
</dbReference>
<dbReference type="Gramene" id="Os05t0571100-02">
    <property type="protein sequence ID" value="Os05t0571100-02"/>
    <property type="gene ID" value="Os05g0571100"/>
</dbReference>
<dbReference type="KEGG" id="dosa:Os05g0571100"/>
<dbReference type="KEGG" id="osa:4339664"/>
<dbReference type="eggNOG" id="ENOG502QRW0">
    <property type="taxonomic scope" value="Eukaryota"/>
</dbReference>
<dbReference type="HOGENOM" id="CLU_024287_4_1_1"/>
<dbReference type="InParanoid" id="Q65XL5"/>
<dbReference type="OMA" id="CAVIHEM"/>
<dbReference type="OrthoDB" id="2019558at2759"/>
<dbReference type="Proteomes" id="UP000000763">
    <property type="component" value="Chromosome 5"/>
</dbReference>
<dbReference type="Proteomes" id="UP000007752">
    <property type="component" value="Chromosome 5"/>
</dbReference>
<dbReference type="Proteomes" id="UP000059680">
    <property type="component" value="Chromosome 5"/>
</dbReference>
<dbReference type="GO" id="GO:0009507">
    <property type="term" value="C:chloroplast"/>
    <property type="evidence" value="ECO:0007669"/>
    <property type="project" value="UniProtKB-SubCell"/>
</dbReference>
<dbReference type="GO" id="GO:0003729">
    <property type="term" value="F:mRNA binding"/>
    <property type="evidence" value="ECO:0007669"/>
    <property type="project" value="EnsemblPlants"/>
</dbReference>
<dbReference type="GO" id="GO:0000373">
    <property type="term" value="P:Group II intron splicing"/>
    <property type="evidence" value="ECO:0007669"/>
    <property type="project" value="EnsemblPlants"/>
</dbReference>
<dbReference type="GO" id="GO:0006397">
    <property type="term" value="P:mRNA processing"/>
    <property type="evidence" value="ECO:0007669"/>
    <property type="project" value="UniProtKB-KW"/>
</dbReference>
<dbReference type="GO" id="GO:0015979">
    <property type="term" value="P:photosynthesis"/>
    <property type="evidence" value="ECO:0007669"/>
    <property type="project" value="EnsemblPlants"/>
</dbReference>
<dbReference type="InterPro" id="IPR021099">
    <property type="entry name" value="PORR_domain"/>
</dbReference>
<dbReference type="InterPro" id="IPR045040">
    <property type="entry name" value="PORR_fam"/>
</dbReference>
<dbReference type="PANTHER" id="PTHR31476">
    <property type="entry name" value="PROTEIN WHAT'S THIS FACTOR 1 HOMOLOG, CHLOROPLASTIC"/>
    <property type="match status" value="1"/>
</dbReference>
<dbReference type="PANTHER" id="PTHR31476:SF4">
    <property type="entry name" value="PROTEIN WHAT'S THIS FACTOR 1 HOMOLOG, CHLOROPLASTIC"/>
    <property type="match status" value="1"/>
</dbReference>
<dbReference type="Pfam" id="PF11955">
    <property type="entry name" value="PORR"/>
    <property type="match status" value="1"/>
</dbReference>
<feature type="transit peptide" description="Chloroplast" evidence="2">
    <location>
        <begin position="1"/>
        <end position="56"/>
    </location>
</feature>
<feature type="chain" id="PRO_0000441885" description="Protein WHAT'S THIS FACTOR 1 homolog, chloroplastic">
    <location>
        <begin position="57"/>
        <end position="509"/>
    </location>
</feature>
<feature type="domain" description="PORR" evidence="2">
    <location>
        <begin position="65"/>
        <end position="393"/>
    </location>
</feature>
<feature type="region of interest" description="Disordered" evidence="3">
    <location>
        <begin position="402"/>
        <end position="431"/>
    </location>
</feature>
<feature type="region of interest" description="Disordered" evidence="3">
    <location>
        <begin position="444"/>
        <end position="509"/>
    </location>
</feature>
<feature type="compositionally biased region" description="Acidic residues" evidence="3">
    <location>
        <begin position="461"/>
        <end position="474"/>
    </location>
</feature>